<sequence>MASIPHYDYLVIGGGSGGVASARRAASYGAKTLLIEGKALGGTCVNVGCVPKKVMWNASDLAGRIRQAKEYGFPDVDPKYADNFDWSGFKAKRDAYVKRLNGIYERNLQKEGVEYVFGWATLYKQEGQEFPLVHVKSDDGNTKLYSAKKIMIATGGKPRLPDVPGAEYGIDSDGFFALETQPKRVAVVGGGYIGVELAGVFHGLNSETTLFCRGQTVLRAFDIMIQDTITDYYVKEGINVLKGSGVKKIVKKDNGELLVTYEQDGAEKDITLDSLIWTIGREPLKDTLNLGEFGIKTNKRGYIEVDEYQRSSVDNIYSLGDVCGKVELTPMAIAAGRKLSNRLFGPTEFKNQKQDYTDVPSAVFSHPEVGSIGITEAAAKEQYGEENVKVYTSKFVAMYYAMLEEKAPTAYKLVCAGKDEKVVGLHIVGADSAEILQGFGVAIRMGATKADFDNVVAIHPTSAEELVTMR</sequence>
<accession>Q6C5H4</accession>
<comment type="function">
    <text evidence="3">Catalyzes the reduction of glutathione disulfide (GSSG) to reduced glutathione (GSH). Constitutes the major mechanism to maintain a high GSH:GSSG ratio in the cytosol.</text>
</comment>
<comment type="catalytic activity">
    <reaction evidence="3">
        <text>2 glutathione + NADP(+) = glutathione disulfide + NADPH + H(+)</text>
        <dbReference type="Rhea" id="RHEA:11740"/>
        <dbReference type="ChEBI" id="CHEBI:15378"/>
        <dbReference type="ChEBI" id="CHEBI:57783"/>
        <dbReference type="ChEBI" id="CHEBI:57925"/>
        <dbReference type="ChEBI" id="CHEBI:58297"/>
        <dbReference type="ChEBI" id="CHEBI:58349"/>
        <dbReference type="EC" id="1.8.1.7"/>
    </reaction>
</comment>
<comment type="cofactor">
    <cofactor evidence="3">
        <name>FAD</name>
        <dbReference type="ChEBI" id="CHEBI:57692"/>
    </cofactor>
    <text evidence="3">Binds 1 FAD per subunit.</text>
</comment>
<comment type="subunit">
    <text evidence="3">Homodimer.</text>
</comment>
<comment type="subcellular location">
    <subcellularLocation>
        <location evidence="3">Cytoplasm</location>
    </subcellularLocation>
    <subcellularLocation>
        <location evidence="3">Mitochondrion</location>
    </subcellularLocation>
</comment>
<comment type="miscellaneous">
    <text evidence="3">The active site is a redox-active disulfide bond.</text>
</comment>
<comment type="similarity">
    <text evidence="4">Belongs to the class-I pyridine nucleotide-disulfide oxidoreductase family.</text>
</comment>
<gene>
    <name type="primary">GLR1</name>
    <name type="ordered locus">YALI0E18029g</name>
</gene>
<organism>
    <name type="scientific">Yarrowia lipolytica (strain CLIB 122 / E 150)</name>
    <name type="common">Yeast</name>
    <name type="synonym">Candida lipolytica</name>
    <dbReference type="NCBI Taxonomy" id="284591"/>
    <lineage>
        <taxon>Eukaryota</taxon>
        <taxon>Fungi</taxon>
        <taxon>Dikarya</taxon>
        <taxon>Ascomycota</taxon>
        <taxon>Saccharomycotina</taxon>
        <taxon>Dipodascomycetes</taxon>
        <taxon>Dipodascales</taxon>
        <taxon>Dipodascales incertae sedis</taxon>
        <taxon>Yarrowia</taxon>
    </lineage>
</organism>
<name>GSHR_YARLI</name>
<feature type="chain" id="PRO_0000067971" description="Glutathione reductase">
    <location>
        <begin position="1"/>
        <end position="470"/>
    </location>
</feature>
<feature type="active site" description="Proton acceptor" evidence="1">
    <location>
        <position position="459"/>
    </location>
</feature>
<feature type="binding site" evidence="3">
    <location>
        <position position="16"/>
    </location>
    <ligand>
        <name>FAD</name>
        <dbReference type="ChEBI" id="CHEBI:57692"/>
    </ligand>
</feature>
<feature type="binding site" evidence="1">
    <location>
        <position position="16"/>
    </location>
    <ligand>
        <name>glutathione</name>
        <dbReference type="ChEBI" id="CHEBI:57925"/>
    </ligand>
</feature>
<feature type="binding site" evidence="3">
    <location>
        <position position="17"/>
    </location>
    <ligand>
        <name>FAD</name>
        <dbReference type="ChEBI" id="CHEBI:57692"/>
    </ligand>
</feature>
<feature type="binding site" evidence="1">
    <location>
        <position position="23"/>
    </location>
    <ligand>
        <name>glutathione</name>
        <dbReference type="ChEBI" id="CHEBI:57925"/>
    </ligand>
</feature>
<feature type="binding site" evidence="3">
    <location>
        <position position="36"/>
    </location>
    <ligand>
        <name>FAD</name>
        <dbReference type="ChEBI" id="CHEBI:57692"/>
    </ligand>
</feature>
<feature type="binding site" evidence="3">
    <location>
        <position position="43"/>
    </location>
    <ligand>
        <name>FAD</name>
        <dbReference type="ChEBI" id="CHEBI:57692"/>
    </ligand>
</feature>
<feature type="binding site" evidence="3">
    <location>
        <position position="44"/>
    </location>
    <ligand>
        <name>FAD</name>
        <dbReference type="ChEBI" id="CHEBI:57692"/>
    </ligand>
</feature>
<feature type="binding site" evidence="3">
    <location>
        <position position="52"/>
    </location>
    <ligand>
        <name>FAD</name>
        <dbReference type="ChEBI" id="CHEBI:57692"/>
    </ligand>
</feature>
<feature type="binding site" evidence="1">
    <location>
        <position position="104"/>
    </location>
    <ligand>
        <name>glutathione</name>
        <dbReference type="ChEBI" id="CHEBI:57925"/>
    </ligand>
</feature>
<feature type="binding site" evidence="3">
    <location>
        <position position="120"/>
    </location>
    <ligand>
        <name>FAD</name>
        <dbReference type="ChEBI" id="CHEBI:57692"/>
    </ligand>
</feature>
<feature type="binding site" evidence="2">
    <location>
        <position position="190"/>
    </location>
    <ligand>
        <name>NADP(+)</name>
        <dbReference type="ChEBI" id="CHEBI:58349"/>
    </ligand>
</feature>
<feature type="binding site" evidence="2">
    <location>
        <position position="193"/>
    </location>
    <ligand>
        <name>NADP(+)</name>
        <dbReference type="ChEBI" id="CHEBI:58349"/>
    </ligand>
</feature>
<feature type="binding site" evidence="2">
    <location>
        <position position="196"/>
    </location>
    <ligand>
        <name>NADP(+)</name>
        <dbReference type="ChEBI" id="CHEBI:58349"/>
    </ligand>
</feature>
<feature type="binding site" evidence="2">
    <location>
        <position position="213"/>
    </location>
    <ligand>
        <name>NADP(+)</name>
        <dbReference type="ChEBI" id="CHEBI:58349"/>
    </ligand>
</feature>
<feature type="binding site" evidence="2">
    <location>
        <position position="219"/>
    </location>
    <ligand>
        <name>NADP(+)</name>
        <dbReference type="ChEBI" id="CHEBI:58349"/>
    </ligand>
</feature>
<feature type="binding site" evidence="3">
    <location>
        <position position="228"/>
    </location>
    <ligand>
        <name>glutathione</name>
        <dbReference type="ChEBI" id="CHEBI:57925"/>
    </ligand>
</feature>
<feature type="binding site" evidence="2">
    <location>
        <position position="280"/>
    </location>
    <ligand>
        <name>NADP(+)</name>
        <dbReference type="ChEBI" id="CHEBI:58349"/>
    </ligand>
</feature>
<feature type="binding site" evidence="3">
    <location>
        <position position="321"/>
    </location>
    <ligand>
        <name>FAD</name>
        <dbReference type="ChEBI" id="CHEBI:57692"/>
    </ligand>
</feature>
<feature type="binding site" evidence="2">
    <location>
        <position position="327"/>
    </location>
    <ligand>
        <name>NADP(+)</name>
        <dbReference type="ChEBI" id="CHEBI:58349"/>
    </ligand>
</feature>
<feature type="binding site" evidence="3">
    <location>
        <position position="329"/>
    </location>
    <ligand>
        <name>FAD</name>
        <dbReference type="ChEBI" id="CHEBI:57692"/>
    </ligand>
</feature>
<feature type="binding site" evidence="1">
    <location>
        <position position="337"/>
    </location>
    <ligand>
        <name>glutathione</name>
        <dbReference type="ChEBI" id="CHEBI:57925"/>
    </ligand>
</feature>
<feature type="binding site" evidence="2">
    <location>
        <position position="362"/>
    </location>
    <ligand>
        <name>NADP(+)</name>
        <dbReference type="ChEBI" id="CHEBI:58349"/>
    </ligand>
</feature>
<feature type="binding site" evidence="3">
    <location>
        <position position="412"/>
    </location>
    <ligand>
        <name>glutathione</name>
        <dbReference type="ChEBI" id="CHEBI:57925"/>
    </ligand>
</feature>
<feature type="binding site" evidence="3">
    <location>
        <position position="459"/>
    </location>
    <ligand>
        <name>FAD</name>
        <dbReference type="ChEBI" id="CHEBI:57692"/>
    </ligand>
</feature>
<feature type="disulfide bond" description="Redox-active" evidence="3">
    <location>
        <begin position="44"/>
        <end position="49"/>
    </location>
</feature>
<dbReference type="EC" id="1.8.1.7"/>
<dbReference type="EMBL" id="CR382131">
    <property type="protein sequence ID" value="CAG79681.1"/>
    <property type="molecule type" value="Genomic_DNA"/>
</dbReference>
<dbReference type="RefSeq" id="XP_504088.1">
    <property type="nucleotide sequence ID" value="XM_504088.1"/>
</dbReference>
<dbReference type="SMR" id="Q6C5H4"/>
<dbReference type="FunCoup" id="Q6C5H4">
    <property type="interactions" value="1141"/>
</dbReference>
<dbReference type="STRING" id="284591.Q6C5H4"/>
<dbReference type="EnsemblFungi" id="CAG79681">
    <property type="protein sequence ID" value="CAG79681"/>
    <property type="gene ID" value="YALI0_E18029g"/>
</dbReference>
<dbReference type="KEGG" id="yli:2911696"/>
<dbReference type="VEuPathDB" id="FungiDB:YALI0_E18029g"/>
<dbReference type="HOGENOM" id="CLU_016755_2_2_1"/>
<dbReference type="InParanoid" id="Q6C5H4"/>
<dbReference type="OMA" id="MSKHYDY"/>
<dbReference type="OrthoDB" id="107104at4891"/>
<dbReference type="Proteomes" id="UP000001300">
    <property type="component" value="Chromosome E"/>
</dbReference>
<dbReference type="GO" id="GO:0005829">
    <property type="term" value="C:cytosol"/>
    <property type="evidence" value="ECO:0000318"/>
    <property type="project" value="GO_Central"/>
</dbReference>
<dbReference type="GO" id="GO:0005739">
    <property type="term" value="C:mitochondrion"/>
    <property type="evidence" value="ECO:0000318"/>
    <property type="project" value="GO_Central"/>
</dbReference>
<dbReference type="GO" id="GO:0005634">
    <property type="term" value="C:nucleus"/>
    <property type="evidence" value="ECO:0007669"/>
    <property type="project" value="EnsemblFungi"/>
</dbReference>
<dbReference type="GO" id="GO:0005777">
    <property type="term" value="C:peroxisome"/>
    <property type="evidence" value="ECO:0007669"/>
    <property type="project" value="EnsemblFungi"/>
</dbReference>
<dbReference type="GO" id="GO:0050660">
    <property type="term" value="F:flavin adenine dinucleotide binding"/>
    <property type="evidence" value="ECO:0000318"/>
    <property type="project" value="GO_Central"/>
</dbReference>
<dbReference type="GO" id="GO:0004362">
    <property type="term" value="F:glutathione-disulfide reductase (NADPH) activity"/>
    <property type="evidence" value="ECO:0000318"/>
    <property type="project" value="GO_Central"/>
</dbReference>
<dbReference type="GO" id="GO:0050661">
    <property type="term" value="F:NADP binding"/>
    <property type="evidence" value="ECO:0007669"/>
    <property type="project" value="InterPro"/>
</dbReference>
<dbReference type="GO" id="GO:0045454">
    <property type="term" value="P:cell redox homeostasis"/>
    <property type="evidence" value="ECO:0000318"/>
    <property type="project" value="GO_Central"/>
</dbReference>
<dbReference type="GO" id="GO:0034599">
    <property type="term" value="P:cellular response to oxidative stress"/>
    <property type="evidence" value="ECO:0000318"/>
    <property type="project" value="GO_Central"/>
</dbReference>
<dbReference type="GO" id="GO:0006749">
    <property type="term" value="P:glutathione metabolic process"/>
    <property type="evidence" value="ECO:0000318"/>
    <property type="project" value="GO_Central"/>
</dbReference>
<dbReference type="FunFam" id="3.30.390.30:FF:000003">
    <property type="entry name" value="Glutathione reductase"/>
    <property type="match status" value="1"/>
</dbReference>
<dbReference type="FunFam" id="3.50.50.60:FF:000235">
    <property type="entry name" value="Glutathione reductase"/>
    <property type="match status" value="1"/>
</dbReference>
<dbReference type="Gene3D" id="3.30.390.30">
    <property type="match status" value="1"/>
</dbReference>
<dbReference type="Gene3D" id="3.50.50.60">
    <property type="entry name" value="FAD/NAD(P)-binding domain"/>
    <property type="match status" value="2"/>
</dbReference>
<dbReference type="InterPro" id="IPR036188">
    <property type="entry name" value="FAD/NAD-bd_sf"/>
</dbReference>
<dbReference type="InterPro" id="IPR023753">
    <property type="entry name" value="FAD/NAD-binding_dom"/>
</dbReference>
<dbReference type="InterPro" id="IPR016156">
    <property type="entry name" value="FAD/NAD-linked_Rdtase_dimer_sf"/>
</dbReference>
<dbReference type="InterPro" id="IPR006322">
    <property type="entry name" value="Glutathione_Rdtase_euk/bac"/>
</dbReference>
<dbReference type="InterPro" id="IPR046952">
    <property type="entry name" value="GSHR/TRXR-like"/>
</dbReference>
<dbReference type="InterPro" id="IPR001100">
    <property type="entry name" value="Pyr_nuc-diS_OxRdtase"/>
</dbReference>
<dbReference type="InterPro" id="IPR004099">
    <property type="entry name" value="Pyr_nucl-diS_OxRdtase_dimer"/>
</dbReference>
<dbReference type="InterPro" id="IPR012999">
    <property type="entry name" value="Pyr_OxRdtase_I_AS"/>
</dbReference>
<dbReference type="NCBIfam" id="TIGR01421">
    <property type="entry name" value="gluta_reduc_1"/>
    <property type="match status" value="1"/>
</dbReference>
<dbReference type="NCBIfam" id="NF004776">
    <property type="entry name" value="PRK06116.1"/>
    <property type="match status" value="1"/>
</dbReference>
<dbReference type="PANTHER" id="PTHR42737">
    <property type="entry name" value="GLUTATHIONE REDUCTASE"/>
    <property type="match status" value="1"/>
</dbReference>
<dbReference type="PANTHER" id="PTHR42737:SF2">
    <property type="entry name" value="GLUTATHIONE REDUCTASE"/>
    <property type="match status" value="1"/>
</dbReference>
<dbReference type="Pfam" id="PF07992">
    <property type="entry name" value="Pyr_redox_2"/>
    <property type="match status" value="1"/>
</dbReference>
<dbReference type="Pfam" id="PF02852">
    <property type="entry name" value="Pyr_redox_dim"/>
    <property type="match status" value="1"/>
</dbReference>
<dbReference type="PIRSF" id="PIRSF000350">
    <property type="entry name" value="Mercury_reductase_MerA"/>
    <property type="match status" value="1"/>
</dbReference>
<dbReference type="PRINTS" id="PR00368">
    <property type="entry name" value="FADPNR"/>
</dbReference>
<dbReference type="PRINTS" id="PR00411">
    <property type="entry name" value="PNDRDTASEI"/>
</dbReference>
<dbReference type="SUPFAM" id="SSF51905">
    <property type="entry name" value="FAD/NAD(P)-binding domain"/>
    <property type="match status" value="1"/>
</dbReference>
<dbReference type="SUPFAM" id="SSF55424">
    <property type="entry name" value="FAD/NAD-linked reductases, dimerisation (C-terminal) domain"/>
    <property type="match status" value="1"/>
</dbReference>
<dbReference type="PROSITE" id="PS00076">
    <property type="entry name" value="PYRIDINE_REDOX_1"/>
    <property type="match status" value="1"/>
</dbReference>
<reference key="1">
    <citation type="journal article" date="2004" name="Nature">
        <title>Genome evolution in yeasts.</title>
        <authorList>
            <person name="Dujon B."/>
            <person name="Sherman D."/>
            <person name="Fischer G."/>
            <person name="Durrens P."/>
            <person name="Casaregola S."/>
            <person name="Lafontaine I."/>
            <person name="de Montigny J."/>
            <person name="Marck C."/>
            <person name="Neuveglise C."/>
            <person name="Talla E."/>
            <person name="Goffard N."/>
            <person name="Frangeul L."/>
            <person name="Aigle M."/>
            <person name="Anthouard V."/>
            <person name="Babour A."/>
            <person name="Barbe V."/>
            <person name="Barnay S."/>
            <person name="Blanchin S."/>
            <person name="Beckerich J.-M."/>
            <person name="Beyne E."/>
            <person name="Bleykasten C."/>
            <person name="Boisrame A."/>
            <person name="Boyer J."/>
            <person name="Cattolico L."/>
            <person name="Confanioleri F."/>
            <person name="de Daruvar A."/>
            <person name="Despons L."/>
            <person name="Fabre E."/>
            <person name="Fairhead C."/>
            <person name="Ferry-Dumazet H."/>
            <person name="Groppi A."/>
            <person name="Hantraye F."/>
            <person name="Hennequin C."/>
            <person name="Jauniaux N."/>
            <person name="Joyet P."/>
            <person name="Kachouri R."/>
            <person name="Kerrest A."/>
            <person name="Koszul R."/>
            <person name="Lemaire M."/>
            <person name="Lesur I."/>
            <person name="Ma L."/>
            <person name="Muller H."/>
            <person name="Nicaud J.-M."/>
            <person name="Nikolski M."/>
            <person name="Oztas S."/>
            <person name="Ozier-Kalogeropoulos O."/>
            <person name="Pellenz S."/>
            <person name="Potier S."/>
            <person name="Richard G.-F."/>
            <person name="Straub M.-L."/>
            <person name="Suleau A."/>
            <person name="Swennen D."/>
            <person name="Tekaia F."/>
            <person name="Wesolowski-Louvel M."/>
            <person name="Westhof E."/>
            <person name="Wirth B."/>
            <person name="Zeniou-Meyer M."/>
            <person name="Zivanovic Y."/>
            <person name="Bolotin-Fukuhara M."/>
            <person name="Thierry A."/>
            <person name="Bouchier C."/>
            <person name="Caudron B."/>
            <person name="Scarpelli C."/>
            <person name="Gaillardin C."/>
            <person name="Weissenbach J."/>
            <person name="Wincker P."/>
            <person name="Souciet J.-L."/>
        </authorList>
    </citation>
    <scope>NUCLEOTIDE SEQUENCE [LARGE SCALE GENOMIC DNA]</scope>
    <source>
        <strain>CLIB 122 / E 150</strain>
    </source>
</reference>
<proteinExistence type="inferred from homology"/>
<protein>
    <recommendedName>
        <fullName>Glutathione reductase</fullName>
        <shortName>GR</shortName>
        <shortName>GRase</shortName>
        <ecNumber>1.8.1.7</ecNumber>
    </recommendedName>
</protein>
<evidence type="ECO:0000250" key="1">
    <source>
        <dbReference type="UniProtKB" id="P00390"/>
    </source>
</evidence>
<evidence type="ECO:0000250" key="2">
    <source>
        <dbReference type="UniProtKB" id="P06715"/>
    </source>
</evidence>
<evidence type="ECO:0000250" key="3">
    <source>
        <dbReference type="UniProtKB" id="P41921"/>
    </source>
</evidence>
<evidence type="ECO:0000305" key="4"/>
<keyword id="KW-0963">Cytoplasm</keyword>
<keyword id="KW-1015">Disulfide bond</keyword>
<keyword id="KW-0274">FAD</keyword>
<keyword id="KW-0285">Flavoprotein</keyword>
<keyword id="KW-0496">Mitochondrion</keyword>
<keyword id="KW-0521">NADP</keyword>
<keyword id="KW-0560">Oxidoreductase</keyword>
<keyword id="KW-0676">Redox-active center</keyword>
<keyword id="KW-1185">Reference proteome</keyword>